<evidence type="ECO:0000255" key="1">
    <source>
        <dbReference type="HAMAP-Rule" id="MF_00148"/>
    </source>
</evidence>
<dbReference type="EC" id="3.2.2.27" evidence="1"/>
<dbReference type="EMBL" id="CU928161">
    <property type="protein sequence ID" value="CAR04017.1"/>
    <property type="molecule type" value="Genomic_DNA"/>
</dbReference>
<dbReference type="RefSeq" id="WP_001262723.1">
    <property type="nucleotide sequence ID" value="NC_011742.1"/>
</dbReference>
<dbReference type="SMR" id="B7MIR5"/>
<dbReference type="GeneID" id="75206274"/>
<dbReference type="KEGG" id="ecz:ECS88_2754"/>
<dbReference type="HOGENOM" id="CLU_032162_3_0_6"/>
<dbReference type="Proteomes" id="UP000000747">
    <property type="component" value="Chromosome"/>
</dbReference>
<dbReference type="GO" id="GO:0005737">
    <property type="term" value="C:cytoplasm"/>
    <property type="evidence" value="ECO:0007669"/>
    <property type="project" value="UniProtKB-SubCell"/>
</dbReference>
<dbReference type="GO" id="GO:0004844">
    <property type="term" value="F:uracil DNA N-glycosylase activity"/>
    <property type="evidence" value="ECO:0007669"/>
    <property type="project" value="UniProtKB-UniRule"/>
</dbReference>
<dbReference type="GO" id="GO:0097510">
    <property type="term" value="P:base-excision repair, AP site formation via deaminated base removal"/>
    <property type="evidence" value="ECO:0007669"/>
    <property type="project" value="TreeGrafter"/>
</dbReference>
<dbReference type="CDD" id="cd10027">
    <property type="entry name" value="UDG-F1-like"/>
    <property type="match status" value="1"/>
</dbReference>
<dbReference type="FunFam" id="3.40.470.10:FF:000001">
    <property type="entry name" value="Uracil-DNA glycosylase"/>
    <property type="match status" value="1"/>
</dbReference>
<dbReference type="Gene3D" id="3.40.470.10">
    <property type="entry name" value="Uracil-DNA glycosylase-like domain"/>
    <property type="match status" value="1"/>
</dbReference>
<dbReference type="HAMAP" id="MF_00148">
    <property type="entry name" value="UDG"/>
    <property type="match status" value="1"/>
</dbReference>
<dbReference type="InterPro" id="IPR002043">
    <property type="entry name" value="UDG_fam1"/>
</dbReference>
<dbReference type="InterPro" id="IPR018085">
    <property type="entry name" value="Ura-DNA_Glyclase_AS"/>
</dbReference>
<dbReference type="InterPro" id="IPR005122">
    <property type="entry name" value="Uracil-DNA_glycosylase-like"/>
</dbReference>
<dbReference type="InterPro" id="IPR036895">
    <property type="entry name" value="Uracil-DNA_glycosylase-like_sf"/>
</dbReference>
<dbReference type="NCBIfam" id="NF003588">
    <property type="entry name" value="PRK05254.1-1"/>
    <property type="match status" value="1"/>
</dbReference>
<dbReference type="NCBIfam" id="NF003589">
    <property type="entry name" value="PRK05254.1-2"/>
    <property type="match status" value="1"/>
</dbReference>
<dbReference type="NCBIfam" id="NF003591">
    <property type="entry name" value="PRK05254.1-4"/>
    <property type="match status" value="1"/>
</dbReference>
<dbReference type="NCBIfam" id="NF003592">
    <property type="entry name" value="PRK05254.1-5"/>
    <property type="match status" value="1"/>
</dbReference>
<dbReference type="NCBIfam" id="TIGR00628">
    <property type="entry name" value="ung"/>
    <property type="match status" value="1"/>
</dbReference>
<dbReference type="PANTHER" id="PTHR11264">
    <property type="entry name" value="URACIL-DNA GLYCOSYLASE"/>
    <property type="match status" value="1"/>
</dbReference>
<dbReference type="PANTHER" id="PTHR11264:SF0">
    <property type="entry name" value="URACIL-DNA GLYCOSYLASE"/>
    <property type="match status" value="1"/>
</dbReference>
<dbReference type="Pfam" id="PF03167">
    <property type="entry name" value="UDG"/>
    <property type="match status" value="1"/>
</dbReference>
<dbReference type="SMART" id="SM00986">
    <property type="entry name" value="UDG"/>
    <property type="match status" value="1"/>
</dbReference>
<dbReference type="SMART" id="SM00987">
    <property type="entry name" value="UreE_C"/>
    <property type="match status" value="1"/>
</dbReference>
<dbReference type="SUPFAM" id="SSF52141">
    <property type="entry name" value="Uracil-DNA glycosylase-like"/>
    <property type="match status" value="1"/>
</dbReference>
<dbReference type="PROSITE" id="PS00130">
    <property type="entry name" value="U_DNA_GLYCOSYLASE"/>
    <property type="match status" value="1"/>
</dbReference>
<reference key="1">
    <citation type="journal article" date="2009" name="PLoS Genet.">
        <title>Organised genome dynamics in the Escherichia coli species results in highly diverse adaptive paths.</title>
        <authorList>
            <person name="Touchon M."/>
            <person name="Hoede C."/>
            <person name="Tenaillon O."/>
            <person name="Barbe V."/>
            <person name="Baeriswyl S."/>
            <person name="Bidet P."/>
            <person name="Bingen E."/>
            <person name="Bonacorsi S."/>
            <person name="Bouchier C."/>
            <person name="Bouvet O."/>
            <person name="Calteau A."/>
            <person name="Chiapello H."/>
            <person name="Clermont O."/>
            <person name="Cruveiller S."/>
            <person name="Danchin A."/>
            <person name="Diard M."/>
            <person name="Dossat C."/>
            <person name="Karoui M.E."/>
            <person name="Frapy E."/>
            <person name="Garry L."/>
            <person name="Ghigo J.M."/>
            <person name="Gilles A.M."/>
            <person name="Johnson J."/>
            <person name="Le Bouguenec C."/>
            <person name="Lescat M."/>
            <person name="Mangenot S."/>
            <person name="Martinez-Jehanne V."/>
            <person name="Matic I."/>
            <person name="Nassif X."/>
            <person name="Oztas S."/>
            <person name="Petit M.A."/>
            <person name="Pichon C."/>
            <person name="Rouy Z."/>
            <person name="Ruf C.S."/>
            <person name="Schneider D."/>
            <person name="Tourret J."/>
            <person name="Vacherie B."/>
            <person name="Vallenet D."/>
            <person name="Medigue C."/>
            <person name="Rocha E.P.C."/>
            <person name="Denamur E."/>
        </authorList>
    </citation>
    <scope>NUCLEOTIDE SEQUENCE [LARGE SCALE GENOMIC DNA]</scope>
    <source>
        <strain>S88 / ExPEC</strain>
    </source>
</reference>
<keyword id="KW-0963">Cytoplasm</keyword>
<keyword id="KW-0227">DNA damage</keyword>
<keyword id="KW-0234">DNA repair</keyword>
<keyword id="KW-0378">Hydrolase</keyword>
<keyword id="KW-1185">Reference proteome</keyword>
<proteinExistence type="inferred from homology"/>
<gene>
    <name evidence="1" type="primary">ung</name>
    <name type="ordered locus">ECS88_2754</name>
</gene>
<organism>
    <name type="scientific">Escherichia coli O45:K1 (strain S88 / ExPEC)</name>
    <dbReference type="NCBI Taxonomy" id="585035"/>
    <lineage>
        <taxon>Bacteria</taxon>
        <taxon>Pseudomonadati</taxon>
        <taxon>Pseudomonadota</taxon>
        <taxon>Gammaproteobacteria</taxon>
        <taxon>Enterobacterales</taxon>
        <taxon>Enterobacteriaceae</taxon>
        <taxon>Escherichia</taxon>
    </lineage>
</organism>
<comment type="function">
    <text evidence="1">Excises uracil residues from the DNA which can arise as a result of misincorporation of dUMP residues by DNA polymerase or due to deamination of cytosine.</text>
</comment>
<comment type="catalytic activity">
    <reaction evidence="1">
        <text>Hydrolyzes single-stranded DNA or mismatched double-stranded DNA and polynucleotides, releasing free uracil.</text>
        <dbReference type="EC" id="3.2.2.27"/>
    </reaction>
</comment>
<comment type="subcellular location">
    <subcellularLocation>
        <location evidence="1">Cytoplasm</location>
    </subcellularLocation>
</comment>
<comment type="similarity">
    <text evidence="1">Belongs to the uracil-DNA glycosylase (UDG) superfamily. UNG family.</text>
</comment>
<feature type="chain" id="PRO_1000199781" description="Uracil-DNA glycosylase">
    <location>
        <begin position="1"/>
        <end position="229"/>
    </location>
</feature>
<feature type="active site" description="Proton acceptor" evidence="1">
    <location>
        <position position="64"/>
    </location>
</feature>
<protein>
    <recommendedName>
        <fullName evidence="1">Uracil-DNA glycosylase</fullName>
        <shortName evidence="1">UDG</shortName>
        <ecNumber evidence="1">3.2.2.27</ecNumber>
    </recommendedName>
</protein>
<name>UNG_ECO45</name>
<accession>B7MIR5</accession>
<sequence length="229" mass="25681">MANELTWHDVLAEEKQQPYFLNTLQTVASERQSGVTIYPPQKDVFNAFRFTELGDVKVVILGQDPYHGPGQAHGLAFSVRPGIATPPSLLNMYKELENTIPGFTRPNHGYLESWARQGVLLLNTVLTVRAGQAHSHASLGWETFTDKVISLINQHREGVVFLLWGSHAQKKGAIIDKQRHHVLKAPHPSPLSAHRGFFGCNHFVLANQWLEQRGETPIDWMPVLPAESE</sequence>